<dbReference type="EC" id="1.2.1.11" evidence="1"/>
<dbReference type="EMBL" id="X75813">
    <property type="protein sequence ID" value="CAA53448.1"/>
    <property type="molecule type" value="Genomic_DNA"/>
</dbReference>
<dbReference type="EMBL" id="BX640415">
    <property type="protein sequence ID" value="CAE41773.1"/>
    <property type="molecule type" value="Genomic_DNA"/>
</dbReference>
<dbReference type="PIR" id="S38661">
    <property type="entry name" value="S38661"/>
</dbReference>
<dbReference type="RefSeq" id="NP_880221.1">
    <property type="nucleotide sequence ID" value="NC_002929.2"/>
</dbReference>
<dbReference type="RefSeq" id="WP_010930382.1">
    <property type="nucleotide sequence ID" value="NZ_CP039022.1"/>
</dbReference>
<dbReference type="SMR" id="P41399"/>
<dbReference type="STRING" id="257313.BP1484"/>
<dbReference type="PaxDb" id="257313-BP1484"/>
<dbReference type="GeneID" id="69601398"/>
<dbReference type="KEGG" id="bpe:BP1484"/>
<dbReference type="PATRIC" id="fig|257313.5.peg.1592"/>
<dbReference type="eggNOG" id="COG0136">
    <property type="taxonomic scope" value="Bacteria"/>
</dbReference>
<dbReference type="HOGENOM" id="CLU_066397_0_0_4"/>
<dbReference type="UniPathway" id="UPA00034">
    <property type="reaction ID" value="UER00016"/>
</dbReference>
<dbReference type="UniPathway" id="UPA00050">
    <property type="reaction ID" value="UER00463"/>
</dbReference>
<dbReference type="UniPathway" id="UPA00051">
    <property type="reaction ID" value="UER00464"/>
</dbReference>
<dbReference type="Proteomes" id="UP000002676">
    <property type="component" value="Chromosome"/>
</dbReference>
<dbReference type="GO" id="GO:0004073">
    <property type="term" value="F:aspartate-semialdehyde dehydrogenase activity"/>
    <property type="evidence" value="ECO:0007669"/>
    <property type="project" value="UniProtKB-UniRule"/>
</dbReference>
<dbReference type="GO" id="GO:0051287">
    <property type="term" value="F:NAD binding"/>
    <property type="evidence" value="ECO:0007669"/>
    <property type="project" value="InterPro"/>
</dbReference>
<dbReference type="GO" id="GO:0050661">
    <property type="term" value="F:NADP binding"/>
    <property type="evidence" value="ECO:0007669"/>
    <property type="project" value="UniProtKB-UniRule"/>
</dbReference>
<dbReference type="GO" id="GO:0046983">
    <property type="term" value="F:protein dimerization activity"/>
    <property type="evidence" value="ECO:0007669"/>
    <property type="project" value="InterPro"/>
</dbReference>
<dbReference type="GO" id="GO:0071266">
    <property type="term" value="P:'de novo' L-methionine biosynthetic process"/>
    <property type="evidence" value="ECO:0007669"/>
    <property type="project" value="UniProtKB-UniRule"/>
</dbReference>
<dbReference type="GO" id="GO:0019877">
    <property type="term" value="P:diaminopimelate biosynthetic process"/>
    <property type="evidence" value="ECO:0007669"/>
    <property type="project" value="UniProtKB-UniRule"/>
</dbReference>
<dbReference type="GO" id="GO:0009097">
    <property type="term" value="P:isoleucine biosynthetic process"/>
    <property type="evidence" value="ECO:0007669"/>
    <property type="project" value="InterPro"/>
</dbReference>
<dbReference type="GO" id="GO:0009089">
    <property type="term" value="P:lysine biosynthetic process via diaminopimelate"/>
    <property type="evidence" value="ECO:0007669"/>
    <property type="project" value="UniProtKB-UniRule"/>
</dbReference>
<dbReference type="GO" id="GO:0009088">
    <property type="term" value="P:threonine biosynthetic process"/>
    <property type="evidence" value="ECO:0007669"/>
    <property type="project" value="UniProtKB-UniRule"/>
</dbReference>
<dbReference type="CDD" id="cd23938">
    <property type="entry name" value="ASADH_C_bac_like"/>
    <property type="match status" value="1"/>
</dbReference>
<dbReference type="CDD" id="cd02314">
    <property type="entry name" value="VcASADH1_like_N"/>
    <property type="match status" value="1"/>
</dbReference>
<dbReference type="Gene3D" id="3.30.360.10">
    <property type="entry name" value="Dihydrodipicolinate Reductase, domain 2"/>
    <property type="match status" value="1"/>
</dbReference>
<dbReference type="Gene3D" id="3.40.50.720">
    <property type="entry name" value="NAD(P)-binding Rossmann-like Domain"/>
    <property type="match status" value="1"/>
</dbReference>
<dbReference type="HAMAP" id="MF_02121">
    <property type="entry name" value="ASADH"/>
    <property type="match status" value="1"/>
</dbReference>
<dbReference type="InterPro" id="IPR000319">
    <property type="entry name" value="Asp-semialdehyde_DH_CS"/>
</dbReference>
<dbReference type="InterPro" id="IPR011534">
    <property type="entry name" value="Asp_ADH_gamma-type"/>
</dbReference>
<dbReference type="InterPro" id="IPR012080">
    <property type="entry name" value="Asp_semialdehyde_DH"/>
</dbReference>
<dbReference type="InterPro" id="IPR036291">
    <property type="entry name" value="NAD(P)-bd_dom_sf"/>
</dbReference>
<dbReference type="InterPro" id="IPR000534">
    <property type="entry name" value="Semialdehyde_DH_NAD-bd"/>
</dbReference>
<dbReference type="InterPro" id="IPR012280">
    <property type="entry name" value="Semialdhyde_DH_dimer_dom"/>
</dbReference>
<dbReference type="NCBIfam" id="TIGR01745">
    <property type="entry name" value="asd_gamma"/>
    <property type="match status" value="1"/>
</dbReference>
<dbReference type="NCBIfam" id="NF005144">
    <property type="entry name" value="PRK06598.1"/>
    <property type="match status" value="1"/>
</dbReference>
<dbReference type="PANTHER" id="PTHR46278:SF4">
    <property type="entry name" value="ASPARTATE-SEMIALDEHYDE DEHYDROGENASE"/>
    <property type="match status" value="1"/>
</dbReference>
<dbReference type="PANTHER" id="PTHR46278">
    <property type="entry name" value="DEHYDROGENASE, PUTATIVE-RELATED"/>
    <property type="match status" value="1"/>
</dbReference>
<dbReference type="Pfam" id="PF01118">
    <property type="entry name" value="Semialdhyde_dh"/>
    <property type="match status" value="1"/>
</dbReference>
<dbReference type="Pfam" id="PF02774">
    <property type="entry name" value="Semialdhyde_dhC"/>
    <property type="match status" value="1"/>
</dbReference>
<dbReference type="PIRSF" id="PIRSF000148">
    <property type="entry name" value="ASA_dh"/>
    <property type="match status" value="1"/>
</dbReference>
<dbReference type="SMART" id="SM00859">
    <property type="entry name" value="Semialdhyde_dh"/>
    <property type="match status" value="1"/>
</dbReference>
<dbReference type="SUPFAM" id="SSF55347">
    <property type="entry name" value="Glyceraldehyde-3-phosphate dehydrogenase-like, C-terminal domain"/>
    <property type="match status" value="1"/>
</dbReference>
<dbReference type="SUPFAM" id="SSF51735">
    <property type="entry name" value="NAD(P)-binding Rossmann-fold domains"/>
    <property type="match status" value="1"/>
</dbReference>
<dbReference type="PROSITE" id="PS01103">
    <property type="entry name" value="ASD"/>
    <property type="match status" value="1"/>
</dbReference>
<keyword id="KW-0028">Amino-acid biosynthesis</keyword>
<keyword id="KW-0220">Diaminopimelate biosynthesis</keyword>
<keyword id="KW-0457">Lysine biosynthesis</keyword>
<keyword id="KW-0486">Methionine biosynthesis</keyword>
<keyword id="KW-0521">NADP</keyword>
<keyword id="KW-0560">Oxidoreductase</keyword>
<keyword id="KW-1185">Reference proteome</keyword>
<keyword id="KW-0791">Threonine biosynthesis</keyword>
<reference key="1">
    <citation type="submission" date="1993-10" db="EMBL/GenBank/DDBJ databases">
        <authorList>
            <person name="Ter A.R."/>
            <person name="Mooi F.R."/>
        </authorList>
    </citation>
    <scope>NUCLEOTIDE SEQUENCE [GENOMIC DNA]</scope>
    <source>
        <strain>Tohama I / ATCC BAA-589 / NCTC 13251</strain>
    </source>
</reference>
<reference key="2">
    <citation type="journal article" date="2003" name="Nat. Genet.">
        <title>Comparative analysis of the genome sequences of Bordetella pertussis, Bordetella parapertussis and Bordetella bronchiseptica.</title>
        <authorList>
            <person name="Parkhill J."/>
            <person name="Sebaihia M."/>
            <person name="Preston A."/>
            <person name="Murphy L.D."/>
            <person name="Thomson N.R."/>
            <person name="Harris D.E."/>
            <person name="Holden M.T.G."/>
            <person name="Churcher C.M."/>
            <person name="Bentley S.D."/>
            <person name="Mungall K.L."/>
            <person name="Cerdeno-Tarraga A.-M."/>
            <person name="Temple L."/>
            <person name="James K.D."/>
            <person name="Harris B."/>
            <person name="Quail M.A."/>
            <person name="Achtman M."/>
            <person name="Atkin R."/>
            <person name="Baker S."/>
            <person name="Basham D."/>
            <person name="Bason N."/>
            <person name="Cherevach I."/>
            <person name="Chillingworth T."/>
            <person name="Collins M."/>
            <person name="Cronin A."/>
            <person name="Davis P."/>
            <person name="Doggett J."/>
            <person name="Feltwell T."/>
            <person name="Goble A."/>
            <person name="Hamlin N."/>
            <person name="Hauser H."/>
            <person name="Holroyd S."/>
            <person name="Jagels K."/>
            <person name="Leather S."/>
            <person name="Moule S."/>
            <person name="Norberczak H."/>
            <person name="O'Neil S."/>
            <person name="Ormond D."/>
            <person name="Price C."/>
            <person name="Rabbinowitsch E."/>
            <person name="Rutter S."/>
            <person name="Sanders M."/>
            <person name="Saunders D."/>
            <person name="Seeger K."/>
            <person name="Sharp S."/>
            <person name="Simmonds M."/>
            <person name="Skelton J."/>
            <person name="Squares R."/>
            <person name="Squares S."/>
            <person name="Stevens K."/>
            <person name="Unwin L."/>
            <person name="Whitehead S."/>
            <person name="Barrell B.G."/>
            <person name="Maskell D.J."/>
        </authorList>
    </citation>
    <scope>NUCLEOTIDE SEQUENCE [LARGE SCALE GENOMIC DNA]</scope>
    <source>
        <strain>Tohama I / ATCC BAA-589 / NCTC 13251</strain>
    </source>
</reference>
<comment type="function">
    <text evidence="1">Catalyzes the NADPH-dependent formation of L-aspartate-semialdehyde (L-ASA) by the reductive dephosphorylation of L-aspartyl-4-phosphate.</text>
</comment>
<comment type="catalytic activity">
    <reaction evidence="1">
        <text>L-aspartate 4-semialdehyde + phosphate + NADP(+) = 4-phospho-L-aspartate + NADPH + H(+)</text>
        <dbReference type="Rhea" id="RHEA:24284"/>
        <dbReference type="ChEBI" id="CHEBI:15378"/>
        <dbReference type="ChEBI" id="CHEBI:43474"/>
        <dbReference type="ChEBI" id="CHEBI:57535"/>
        <dbReference type="ChEBI" id="CHEBI:57783"/>
        <dbReference type="ChEBI" id="CHEBI:58349"/>
        <dbReference type="ChEBI" id="CHEBI:537519"/>
        <dbReference type="EC" id="1.2.1.11"/>
    </reaction>
</comment>
<comment type="pathway">
    <text evidence="1">Amino-acid biosynthesis; L-lysine biosynthesis via DAP pathway; (S)-tetrahydrodipicolinate from L-aspartate: step 2/4.</text>
</comment>
<comment type="pathway">
    <text evidence="1">Amino-acid biosynthesis; L-methionine biosynthesis via de novo pathway; L-homoserine from L-aspartate: step 2/3.</text>
</comment>
<comment type="pathway">
    <text evidence="1">Amino-acid biosynthesis; L-threonine biosynthesis; L-threonine from L-aspartate: step 2/5.</text>
</comment>
<comment type="subunit">
    <text evidence="1">Homodimer.</text>
</comment>
<comment type="similarity">
    <text evidence="1">Belongs to the aspartate-semialdehyde dehydrogenase family.</text>
</comment>
<protein>
    <recommendedName>
        <fullName evidence="1">Aspartate-semialdehyde dehydrogenase</fullName>
        <shortName evidence="1">ASA dehydrogenase</shortName>
        <shortName evidence="1">ASADH</shortName>
        <ecNumber evidence="1">1.2.1.11</ecNumber>
    </recommendedName>
    <alternativeName>
        <fullName evidence="1">Aspartate-beta-semialdehyde dehydrogenase</fullName>
    </alternativeName>
</protein>
<accession>P41399</accession>
<proteinExistence type="inferred from homology"/>
<organism>
    <name type="scientific">Bordetella pertussis (strain Tohama I / ATCC BAA-589 / NCTC 13251)</name>
    <dbReference type="NCBI Taxonomy" id="257313"/>
    <lineage>
        <taxon>Bacteria</taxon>
        <taxon>Pseudomonadati</taxon>
        <taxon>Pseudomonadota</taxon>
        <taxon>Betaproteobacteria</taxon>
        <taxon>Burkholderiales</taxon>
        <taxon>Alcaligenaceae</taxon>
        <taxon>Bordetella</taxon>
    </lineage>
</organism>
<feature type="chain" id="PRO_0000141362" description="Aspartate-semialdehyde dehydrogenase">
    <location>
        <begin position="1"/>
        <end position="376"/>
    </location>
</feature>
<feature type="active site" description="Acyl-thioester intermediate" evidence="1">
    <location>
        <position position="136"/>
    </location>
</feature>
<feature type="active site" description="Proton acceptor" evidence="1">
    <location>
        <position position="280"/>
    </location>
</feature>
<feature type="binding site" evidence="1">
    <location>
        <begin position="11"/>
        <end position="14"/>
    </location>
    <ligand>
        <name>NADP(+)</name>
        <dbReference type="ChEBI" id="CHEBI:58349"/>
    </ligand>
</feature>
<feature type="binding site" evidence="1">
    <location>
        <begin position="38"/>
        <end position="39"/>
    </location>
    <ligand>
        <name>NADP(+)</name>
        <dbReference type="ChEBI" id="CHEBI:58349"/>
    </ligand>
</feature>
<feature type="binding site" evidence="1">
    <location>
        <position position="74"/>
    </location>
    <ligand>
        <name>NADP(+)</name>
        <dbReference type="ChEBI" id="CHEBI:58349"/>
    </ligand>
</feature>
<feature type="binding site" evidence="1">
    <location>
        <position position="103"/>
    </location>
    <ligand>
        <name>phosphate</name>
        <dbReference type="ChEBI" id="CHEBI:43474"/>
    </ligand>
</feature>
<feature type="binding site" evidence="1">
    <location>
        <position position="163"/>
    </location>
    <ligand>
        <name>substrate</name>
    </ligand>
</feature>
<feature type="binding site" evidence="1">
    <location>
        <begin position="166"/>
        <end position="167"/>
    </location>
    <ligand>
        <name>NADP(+)</name>
        <dbReference type="ChEBI" id="CHEBI:58349"/>
    </ligand>
</feature>
<feature type="binding site" evidence="1">
    <location>
        <position position="194"/>
    </location>
    <ligand>
        <name>NADP(+)</name>
        <dbReference type="ChEBI" id="CHEBI:58349"/>
    </ligand>
</feature>
<feature type="binding site" evidence="1">
    <location>
        <position position="242"/>
    </location>
    <ligand>
        <name>substrate</name>
    </ligand>
</feature>
<feature type="binding site" evidence="1">
    <location>
        <position position="245"/>
    </location>
    <ligand>
        <name>phosphate</name>
        <dbReference type="ChEBI" id="CHEBI:43474"/>
    </ligand>
</feature>
<feature type="binding site" evidence="1">
    <location>
        <position position="273"/>
    </location>
    <ligand>
        <name>substrate</name>
    </ligand>
</feature>
<feature type="binding site" evidence="1">
    <location>
        <position position="356"/>
    </location>
    <ligand>
        <name>NADP(+)</name>
        <dbReference type="ChEBI" id="CHEBI:58349"/>
    </ligand>
</feature>
<name>DHAS_BORPE</name>
<sequence length="376" mass="40333">MTQAVGLVGWRGMVGSVLMQRMRDENDFALIEPVFFSTSNAGGAAPAWAEGAGSLQNAYDIDALKKLPIIVTAQGGDYTSEVYPKLRGAGWQGIWIDAASTLRMADDAIIVLDPVNRPVIDAALKRGVRNFVGGNCTVSCMLMGLAGLFNNDLVEWMSSMTYQAASGGGAQHMRELLTQFGLLNQAVKPLLDDPAAAILDIDRGVLARQQDPSLPQEHFGVPLGGNLIPWIDKDLGDGMSREEWKAEAETNKILGRGAAFGTPATPIDGLCVRIGAMRCHSQALTIKLKRDVPLDEIEDLIAAGTQWAKVVPNTKEDTVKALTPVAVTGTLDIPVGRLRKLSMGLQYLGAFTVGDQLLWGAAEPLRRMLRIALAEA</sequence>
<gene>
    <name evidence="1" type="primary">asd</name>
    <name type="ordered locus">BP1484</name>
</gene>
<evidence type="ECO:0000255" key="1">
    <source>
        <dbReference type="HAMAP-Rule" id="MF_02121"/>
    </source>
</evidence>